<protein>
    <recommendedName>
        <fullName evidence="1">Imidazoleglycerol-phosphate dehydratase</fullName>
        <shortName evidence="1">IGPD</shortName>
        <ecNumber evidence="1">4.2.1.19</ecNumber>
    </recommendedName>
</protein>
<sequence>MADRKAQVSRDTLETQISVELNLDGTGTGKFNTGVPFLEHMMDQIARHGFIDLDVTCKGDTYIDDHHSVEDIGITIGQAMAKAVGDKRGIRRYGHAYVPLDEALSRVVIDFSGRPGLIMNIPFTQKRIGKFDTELFWEFFQGFVNHAGVTLHVDCLRGENAHHQIETVFKAFGRSLRMALERDERLGDAMPSTKGTL</sequence>
<accession>Q21NH8</accession>
<dbReference type="EC" id="4.2.1.19" evidence="1"/>
<dbReference type="EMBL" id="CP000282">
    <property type="protein sequence ID" value="ABD79751.1"/>
    <property type="molecule type" value="Genomic_DNA"/>
</dbReference>
<dbReference type="RefSeq" id="WP_011466972.1">
    <property type="nucleotide sequence ID" value="NC_007912.1"/>
</dbReference>
<dbReference type="SMR" id="Q21NH8"/>
<dbReference type="STRING" id="203122.Sde_0487"/>
<dbReference type="GeneID" id="98612187"/>
<dbReference type="KEGG" id="sde:Sde_0487"/>
<dbReference type="eggNOG" id="COG0131">
    <property type="taxonomic scope" value="Bacteria"/>
</dbReference>
<dbReference type="HOGENOM" id="CLU_044308_3_0_6"/>
<dbReference type="OrthoDB" id="9790411at2"/>
<dbReference type="UniPathway" id="UPA00031">
    <property type="reaction ID" value="UER00011"/>
</dbReference>
<dbReference type="Proteomes" id="UP000001947">
    <property type="component" value="Chromosome"/>
</dbReference>
<dbReference type="GO" id="GO:0005737">
    <property type="term" value="C:cytoplasm"/>
    <property type="evidence" value="ECO:0007669"/>
    <property type="project" value="UniProtKB-SubCell"/>
</dbReference>
<dbReference type="GO" id="GO:0004424">
    <property type="term" value="F:imidazoleglycerol-phosphate dehydratase activity"/>
    <property type="evidence" value="ECO:0007669"/>
    <property type="project" value="UniProtKB-UniRule"/>
</dbReference>
<dbReference type="GO" id="GO:0000105">
    <property type="term" value="P:L-histidine biosynthetic process"/>
    <property type="evidence" value="ECO:0007669"/>
    <property type="project" value="UniProtKB-UniRule"/>
</dbReference>
<dbReference type="CDD" id="cd07914">
    <property type="entry name" value="IGPD"/>
    <property type="match status" value="1"/>
</dbReference>
<dbReference type="FunFam" id="3.30.230.40:FF:000001">
    <property type="entry name" value="Imidazoleglycerol-phosphate dehydratase HisB"/>
    <property type="match status" value="1"/>
</dbReference>
<dbReference type="FunFam" id="3.30.230.40:FF:000003">
    <property type="entry name" value="Imidazoleglycerol-phosphate dehydratase HisB"/>
    <property type="match status" value="1"/>
</dbReference>
<dbReference type="Gene3D" id="3.30.230.40">
    <property type="entry name" value="Imidazole glycerol phosphate dehydratase, domain 1"/>
    <property type="match status" value="2"/>
</dbReference>
<dbReference type="HAMAP" id="MF_00076">
    <property type="entry name" value="HisB"/>
    <property type="match status" value="1"/>
</dbReference>
<dbReference type="InterPro" id="IPR038494">
    <property type="entry name" value="IGPD_sf"/>
</dbReference>
<dbReference type="InterPro" id="IPR000807">
    <property type="entry name" value="ImidazoleglycerolP_deHydtase"/>
</dbReference>
<dbReference type="InterPro" id="IPR020565">
    <property type="entry name" value="ImidazoleglycerP_deHydtase_CS"/>
</dbReference>
<dbReference type="InterPro" id="IPR020568">
    <property type="entry name" value="Ribosomal_Su5_D2-typ_SF"/>
</dbReference>
<dbReference type="NCBIfam" id="NF002106">
    <property type="entry name" value="PRK00951.1-1"/>
    <property type="match status" value="1"/>
</dbReference>
<dbReference type="NCBIfam" id="NF002109">
    <property type="entry name" value="PRK00951.1-5"/>
    <property type="match status" value="1"/>
</dbReference>
<dbReference type="NCBIfam" id="NF002111">
    <property type="entry name" value="PRK00951.2-1"/>
    <property type="match status" value="1"/>
</dbReference>
<dbReference type="NCBIfam" id="NF002114">
    <property type="entry name" value="PRK00951.2-4"/>
    <property type="match status" value="1"/>
</dbReference>
<dbReference type="PANTHER" id="PTHR23133:SF2">
    <property type="entry name" value="IMIDAZOLEGLYCEROL-PHOSPHATE DEHYDRATASE"/>
    <property type="match status" value="1"/>
</dbReference>
<dbReference type="PANTHER" id="PTHR23133">
    <property type="entry name" value="IMIDAZOLEGLYCEROL-PHOSPHATE DEHYDRATASE HIS7"/>
    <property type="match status" value="1"/>
</dbReference>
<dbReference type="Pfam" id="PF00475">
    <property type="entry name" value="IGPD"/>
    <property type="match status" value="1"/>
</dbReference>
<dbReference type="SUPFAM" id="SSF54211">
    <property type="entry name" value="Ribosomal protein S5 domain 2-like"/>
    <property type="match status" value="2"/>
</dbReference>
<dbReference type="PROSITE" id="PS00954">
    <property type="entry name" value="IGP_DEHYDRATASE_1"/>
    <property type="match status" value="1"/>
</dbReference>
<dbReference type="PROSITE" id="PS00955">
    <property type="entry name" value="IGP_DEHYDRATASE_2"/>
    <property type="match status" value="1"/>
</dbReference>
<gene>
    <name evidence="1" type="primary">hisB</name>
    <name type="ordered locus">Sde_0487</name>
</gene>
<evidence type="ECO:0000255" key="1">
    <source>
        <dbReference type="HAMAP-Rule" id="MF_00076"/>
    </source>
</evidence>
<reference key="1">
    <citation type="journal article" date="2008" name="PLoS Genet.">
        <title>Complete genome sequence of the complex carbohydrate-degrading marine bacterium, Saccharophagus degradans strain 2-40 T.</title>
        <authorList>
            <person name="Weiner R.M."/>
            <person name="Taylor L.E. II"/>
            <person name="Henrissat B."/>
            <person name="Hauser L."/>
            <person name="Land M."/>
            <person name="Coutinho P.M."/>
            <person name="Rancurel C."/>
            <person name="Saunders E.H."/>
            <person name="Longmire A.G."/>
            <person name="Zhang H."/>
            <person name="Bayer E.A."/>
            <person name="Gilbert H.J."/>
            <person name="Larimer F."/>
            <person name="Zhulin I.B."/>
            <person name="Ekborg N.A."/>
            <person name="Lamed R."/>
            <person name="Richardson P.M."/>
            <person name="Borovok I."/>
            <person name="Hutcheson S."/>
        </authorList>
    </citation>
    <scope>NUCLEOTIDE SEQUENCE [LARGE SCALE GENOMIC DNA]</scope>
    <source>
        <strain>2-40 / ATCC 43961 / DSM 17024</strain>
    </source>
</reference>
<organism>
    <name type="scientific">Saccharophagus degradans (strain 2-40 / ATCC 43961 / DSM 17024)</name>
    <dbReference type="NCBI Taxonomy" id="203122"/>
    <lineage>
        <taxon>Bacteria</taxon>
        <taxon>Pseudomonadati</taxon>
        <taxon>Pseudomonadota</taxon>
        <taxon>Gammaproteobacteria</taxon>
        <taxon>Cellvibrionales</taxon>
        <taxon>Cellvibrionaceae</taxon>
        <taxon>Saccharophagus</taxon>
    </lineage>
</organism>
<proteinExistence type="inferred from homology"/>
<feature type="chain" id="PRO_1000057522" description="Imidazoleglycerol-phosphate dehydratase">
    <location>
        <begin position="1"/>
        <end position="197"/>
    </location>
</feature>
<keyword id="KW-0028">Amino-acid biosynthesis</keyword>
<keyword id="KW-0963">Cytoplasm</keyword>
<keyword id="KW-0368">Histidine biosynthesis</keyword>
<keyword id="KW-0456">Lyase</keyword>
<keyword id="KW-1185">Reference proteome</keyword>
<name>HIS7_SACD2</name>
<comment type="catalytic activity">
    <reaction evidence="1">
        <text>D-erythro-1-(imidazol-4-yl)glycerol 3-phosphate = 3-(imidazol-4-yl)-2-oxopropyl phosphate + H2O</text>
        <dbReference type="Rhea" id="RHEA:11040"/>
        <dbReference type="ChEBI" id="CHEBI:15377"/>
        <dbReference type="ChEBI" id="CHEBI:57766"/>
        <dbReference type="ChEBI" id="CHEBI:58278"/>
        <dbReference type="EC" id="4.2.1.19"/>
    </reaction>
</comment>
<comment type="pathway">
    <text evidence="1">Amino-acid biosynthesis; L-histidine biosynthesis; L-histidine from 5-phospho-alpha-D-ribose 1-diphosphate: step 6/9.</text>
</comment>
<comment type="subcellular location">
    <subcellularLocation>
        <location evidence="1">Cytoplasm</location>
    </subcellularLocation>
</comment>
<comment type="similarity">
    <text evidence="1">Belongs to the imidazoleglycerol-phosphate dehydratase family.</text>
</comment>